<sequence length="1164" mass="134956">MTMTTNAERKFINLRKRLDQLGYRQPLAIESLPLVEKLFSDLIHTTESLRNAKLAAGKTEKESRNVDAILEPYKTENARLVKENNEMHLGLLKLREEKDRISRELKAYIRKLDHETSDLKFLNNQYVQKVRSLEKDSNGKTERILQLQEKNMQAVVQTPGGKKRSIPFRRQRMQTDELLPSSGGYVPPAVAQPDDPYIADLLQVADDRIQELQKEVAQLKLDLERAQGGIKHLNKQVEERDKEIERLNRALDGGRPHDVISLEAQNISNEKLIAHLNLQIEYLQETNRSLEQRVDSLQQKKKTVSSEVADLSARNQELCQELTQIDQLAQQLEKDKEMVLETADMELQEAKKAIQRQQRELEGQEEVISTLRRDMADGDHVKDQLRNQLLDLQDQNNKMEGLIHFLEEDKKRLQDKIEAMMQEDKEMVLELERMRARHGMCGKDHSPSRLDAFVKSLEEERNYYREEVERYRLVRGRTDRSPTPVGRGRSPRGRGSWHGKRDGDAELSRVVKERDELQSVLLGFEKHMEDIQTRVKLLTAERDQLSSQCQQAQEELRRVQRELESSELQRRIRDDREQTEAELQRVTAERDALRDRLKVAHSTALTDREQEEFRFLDLENTIEKLEREKADLRAQVTVLKESRVVVEKELKAQSAVLLQNVEEATQQRVESSALRLLQEQMEQSLSDVQHRLSVKTNELQAAHQQIDKLEEKIADLSRHGSSQKDEVVILQNTIASLDREKDTLQDAVDQKTESVVLLQQEVHRKEETLLEVRLTVTDLENSLNQLQAVLSSREREIASLRRQLDQSQEELFSVSRDREVALRENRRLQDDLATMTRENQAVHAEMQEALNERDELKLRVHSYISEVARIESLMAAKEQENRDMLERFRSIHTESEDKELKLQQSEGLNNSIRLELLSSDTERRHLRERVSLQDREIQEHLNALQAYEAQVSSLARAMSRLEEEVQAARAEKASVLADLASVRELCVKLDSSKELTVRQLTSKSMELERVTGELEDVRSEMELLKKQLGSERLTVRNLETLLSTNRQKEFQTHISASEKESELKVLKDRLALADSKTAGHAREVSQLRGKVSQLQTEMDVLKRQLTTERFERERAVQEMRRQGLSFSSLRSSSPLSTSLSPRPASPERSILRTPERSTDKTQDK</sequence>
<evidence type="ECO:0000250" key="1">
    <source>
        <dbReference type="UniProtKB" id="Q66GS9"/>
    </source>
</evidence>
<evidence type="ECO:0000250" key="2">
    <source>
        <dbReference type="UniProtKB" id="Q6P5D4"/>
    </source>
</evidence>
<evidence type="ECO:0000255" key="3"/>
<evidence type="ECO:0000256" key="4">
    <source>
        <dbReference type="SAM" id="MobiDB-lite"/>
    </source>
</evidence>
<evidence type="ECO:0000305" key="5"/>
<evidence type="ECO:0007829" key="6">
    <source>
        <dbReference type="PDB" id="7BJI"/>
    </source>
</evidence>
<name>CP135_DANRE</name>
<feature type="chain" id="PRO_0000307124" description="Centrosomal protein of 135 kDa">
    <location>
        <begin position="1"/>
        <end position="1164"/>
    </location>
</feature>
<feature type="region of interest" description="Homodimerization" evidence="1">
    <location>
        <begin position="13"/>
        <end position="66"/>
    </location>
</feature>
<feature type="region of interest" description="Disordered" evidence="4">
    <location>
        <begin position="475"/>
        <end position="505"/>
    </location>
</feature>
<feature type="region of interest" description="Disordered" evidence="4">
    <location>
        <begin position="1121"/>
        <end position="1164"/>
    </location>
</feature>
<feature type="coiled-coil region" evidence="3">
    <location>
        <begin position="77"/>
        <end position="153"/>
    </location>
</feature>
<feature type="coiled-coil region" evidence="3">
    <location>
        <begin position="202"/>
        <end position="423"/>
    </location>
</feature>
<feature type="coiled-coil region" evidence="3">
    <location>
        <begin position="454"/>
        <end position="649"/>
    </location>
</feature>
<feature type="coiled-coil region" evidence="3">
    <location>
        <begin position="673"/>
        <end position="1041"/>
    </location>
</feature>
<feature type="coiled-coil region" evidence="3">
    <location>
        <begin position="1084"/>
        <end position="1118"/>
    </location>
</feature>
<feature type="compositionally biased region" description="Basic residues" evidence="4">
    <location>
        <begin position="489"/>
        <end position="498"/>
    </location>
</feature>
<feature type="compositionally biased region" description="Low complexity" evidence="4">
    <location>
        <begin position="1122"/>
        <end position="1142"/>
    </location>
</feature>
<feature type="compositionally biased region" description="Basic and acidic residues" evidence="4">
    <location>
        <begin position="1149"/>
        <end position="1164"/>
    </location>
</feature>
<feature type="site" description="Microtubule binding" evidence="1">
    <location>
        <position position="103"/>
    </location>
</feature>
<feature type="site" description="Microtubule binding" evidence="1">
    <location>
        <position position="106"/>
    </location>
</feature>
<feature type="site" description="Microtubule binding" evidence="1">
    <location>
        <position position="110"/>
    </location>
</feature>
<feature type="helix" evidence="6">
    <location>
        <begin position="65"/>
        <end position="144"/>
    </location>
</feature>
<feature type="helix" evidence="6">
    <location>
        <begin position="146"/>
        <end position="153"/>
    </location>
</feature>
<proteinExistence type="evidence at protein level"/>
<reference key="1">
    <citation type="journal article" date="2013" name="Nature">
        <title>The zebrafish reference genome sequence and its relationship to the human genome.</title>
        <authorList>
            <person name="Howe K."/>
            <person name="Clark M.D."/>
            <person name="Torroja C.F."/>
            <person name="Torrance J."/>
            <person name="Berthelot C."/>
            <person name="Muffato M."/>
            <person name="Collins J.E."/>
            <person name="Humphray S."/>
            <person name="McLaren K."/>
            <person name="Matthews L."/>
            <person name="McLaren S."/>
            <person name="Sealy I."/>
            <person name="Caccamo M."/>
            <person name="Churcher C."/>
            <person name="Scott C."/>
            <person name="Barrett J.C."/>
            <person name="Koch R."/>
            <person name="Rauch G.J."/>
            <person name="White S."/>
            <person name="Chow W."/>
            <person name="Kilian B."/>
            <person name="Quintais L.T."/>
            <person name="Guerra-Assuncao J.A."/>
            <person name="Zhou Y."/>
            <person name="Gu Y."/>
            <person name="Yen J."/>
            <person name="Vogel J.H."/>
            <person name="Eyre T."/>
            <person name="Redmond S."/>
            <person name="Banerjee R."/>
            <person name="Chi J."/>
            <person name="Fu B."/>
            <person name="Langley E."/>
            <person name="Maguire S.F."/>
            <person name="Laird G.K."/>
            <person name="Lloyd D."/>
            <person name="Kenyon E."/>
            <person name="Donaldson S."/>
            <person name="Sehra H."/>
            <person name="Almeida-King J."/>
            <person name="Loveland J."/>
            <person name="Trevanion S."/>
            <person name="Jones M."/>
            <person name="Quail M."/>
            <person name="Willey D."/>
            <person name="Hunt A."/>
            <person name="Burton J."/>
            <person name="Sims S."/>
            <person name="McLay K."/>
            <person name="Plumb B."/>
            <person name="Davis J."/>
            <person name="Clee C."/>
            <person name="Oliver K."/>
            <person name="Clark R."/>
            <person name="Riddle C."/>
            <person name="Elliot D."/>
            <person name="Threadgold G."/>
            <person name="Harden G."/>
            <person name="Ware D."/>
            <person name="Begum S."/>
            <person name="Mortimore B."/>
            <person name="Kerry G."/>
            <person name="Heath P."/>
            <person name="Phillimore B."/>
            <person name="Tracey A."/>
            <person name="Corby N."/>
            <person name="Dunn M."/>
            <person name="Johnson C."/>
            <person name="Wood J."/>
            <person name="Clark S."/>
            <person name="Pelan S."/>
            <person name="Griffiths G."/>
            <person name="Smith M."/>
            <person name="Glithero R."/>
            <person name="Howden P."/>
            <person name="Barker N."/>
            <person name="Lloyd C."/>
            <person name="Stevens C."/>
            <person name="Harley J."/>
            <person name="Holt K."/>
            <person name="Panagiotidis G."/>
            <person name="Lovell J."/>
            <person name="Beasley H."/>
            <person name="Henderson C."/>
            <person name="Gordon D."/>
            <person name="Auger K."/>
            <person name="Wright D."/>
            <person name="Collins J."/>
            <person name="Raisen C."/>
            <person name="Dyer L."/>
            <person name="Leung K."/>
            <person name="Robertson L."/>
            <person name="Ambridge K."/>
            <person name="Leongamornlert D."/>
            <person name="McGuire S."/>
            <person name="Gilderthorp R."/>
            <person name="Griffiths C."/>
            <person name="Manthravadi D."/>
            <person name="Nichol S."/>
            <person name="Barker G."/>
            <person name="Whitehead S."/>
            <person name="Kay M."/>
            <person name="Brown J."/>
            <person name="Murnane C."/>
            <person name="Gray E."/>
            <person name="Humphries M."/>
            <person name="Sycamore N."/>
            <person name="Barker D."/>
            <person name="Saunders D."/>
            <person name="Wallis J."/>
            <person name="Babbage A."/>
            <person name="Hammond S."/>
            <person name="Mashreghi-Mohammadi M."/>
            <person name="Barr L."/>
            <person name="Martin S."/>
            <person name="Wray P."/>
            <person name="Ellington A."/>
            <person name="Matthews N."/>
            <person name="Ellwood M."/>
            <person name="Woodmansey R."/>
            <person name="Clark G."/>
            <person name="Cooper J."/>
            <person name="Tromans A."/>
            <person name="Grafham D."/>
            <person name="Skuce C."/>
            <person name="Pandian R."/>
            <person name="Andrews R."/>
            <person name="Harrison E."/>
            <person name="Kimberley A."/>
            <person name="Garnett J."/>
            <person name="Fosker N."/>
            <person name="Hall R."/>
            <person name="Garner P."/>
            <person name="Kelly D."/>
            <person name="Bird C."/>
            <person name="Palmer S."/>
            <person name="Gehring I."/>
            <person name="Berger A."/>
            <person name="Dooley C.M."/>
            <person name="Ersan-Urun Z."/>
            <person name="Eser C."/>
            <person name="Geiger H."/>
            <person name="Geisler M."/>
            <person name="Karotki L."/>
            <person name="Kirn A."/>
            <person name="Konantz J."/>
            <person name="Konantz M."/>
            <person name="Oberlander M."/>
            <person name="Rudolph-Geiger S."/>
            <person name="Teucke M."/>
            <person name="Lanz C."/>
            <person name="Raddatz G."/>
            <person name="Osoegawa K."/>
            <person name="Zhu B."/>
            <person name="Rapp A."/>
            <person name="Widaa S."/>
            <person name="Langford C."/>
            <person name="Yang F."/>
            <person name="Schuster S.C."/>
            <person name="Carter N.P."/>
            <person name="Harrow J."/>
            <person name="Ning Z."/>
            <person name="Herrero J."/>
            <person name="Searle S.M."/>
            <person name="Enright A."/>
            <person name="Geisler R."/>
            <person name="Plasterk R.H."/>
            <person name="Lee C."/>
            <person name="Westerfield M."/>
            <person name="de Jong P.J."/>
            <person name="Zon L.I."/>
            <person name="Postlethwait J.H."/>
            <person name="Nusslein-Volhard C."/>
            <person name="Hubbard T.J."/>
            <person name="Roest Crollius H."/>
            <person name="Rogers J."/>
            <person name="Stemple D.L."/>
        </authorList>
    </citation>
    <scope>NUCLEOTIDE SEQUENCE [LARGE SCALE GENOMIC DNA]</scope>
    <source>
        <strain>Tuebingen</strain>
    </source>
</reference>
<reference key="2">
    <citation type="submission" date="2021-01" db="PDB data bank">
        <title>Crystal structure of the Danio rerio centrosomal protein Cep135 coiled-coil fragment 64-190.</title>
        <authorList>
            <person name="Li Q."/>
            <person name="Hatzopoulos G."/>
            <person name="Iller O."/>
            <person name="Vakonakis I."/>
        </authorList>
    </citation>
    <scope>X-RAY CRYSTALLOGRAPHY (2.58 ANGSTROMS) OF 64-190</scope>
</reference>
<organism>
    <name type="scientific">Danio rerio</name>
    <name type="common">Zebrafish</name>
    <name type="synonym">Brachydanio rerio</name>
    <dbReference type="NCBI Taxonomy" id="7955"/>
    <lineage>
        <taxon>Eukaryota</taxon>
        <taxon>Metazoa</taxon>
        <taxon>Chordata</taxon>
        <taxon>Craniata</taxon>
        <taxon>Vertebrata</taxon>
        <taxon>Euteleostomi</taxon>
        <taxon>Actinopterygii</taxon>
        <taxon>Neopterygii</taxon>
        <taxon>Teleostei</taxon>
        <taxon>Ostariophysi</taxon>
        <taxon>Cypriniformes</taxon>
        <taxon>Danionidae</taxon>
        <taxon>Danioninae</taxon>
        <taxon>Danio</taxon>
    </lineage>
</organism>
<protein>
    <recommendedName>
        <fullName>Centrosomal protein of 135 kDa</fullName>
        <shortName>Cep135</shortName>
    </recommendedName>
</protein>
<accession>Q5RG45</accession>
<dbReference type="EMBL" id="CR352243">
    <property type="protein sequence ID" value="CAI21313.2"/>
    <property type="molecule type" value="Genomic_DNA"/>
</dbReference>
<dbReference type="EMBL" id="BX294157">
    <property type="protein sequence ID" value="CAI21313.2"/>
    <property type="status" value="JOINED"/>
    <property type="molecule type" value="Genomic_DNA"/>
</dbReference>
<dbReference type="EMBL" id="BX294157">
    <property type="protein sequence ID" value="CAM56389.1"/>
    <property type="molecule type" value="Genomic_DNA"/>
</dbReference>
<dbReference type="EMBL" id="CR352243">
    <property type="protein sequence ID" value="CAM56389.1"/>
    <property type="status" value="JOINED"/>
    <property type="molecule type" value="Genomic_DNA"/>
</dbReference>
<dbReference type="RefSeq" id="NP_001186919.1">
    <property type="nucleotide sequence ID" value="NM_001199990.1"/>
</dbReference>
<dbReference type="RefSeq" id="XP_009298989.1">
    <property type="nucleotide sequence ID" value="XM_009300714.4"/>
</dbReference>
<dbReference type="PDB" id="7BJI">
    <property type="method" value="X-ray"/>
    <property type="resolution" value="2.58 A"/>
    <property type="chains" value="A/B/C/D=64-190"/>
</dbReference>
<dbReference type="PDBsum" id="7BJI"/>
<dbReference type="SMR" id="Q5RG45"/>
<dbReference type="FunCoup" id="Q5RG45">
    <property type="interactions" value="1379"/>
</dbReference>
<dbReference type="STRING" id="7955.ENSDARP00000035272"/>
<dbReference type="PaxDb" id="7955-ENSDARP00000107420"/>
<dbReference type="Ensembl" id="ENSDART00000033436">
    <property type="protein sequence ID" value="ENSDARP00000035272"/>
    <property type="gene ID" value="ENSDARG00000002991"/>
</dbReference>
<dbReference type="GeneID" id="553303"/>
<dbReference type="KEGG" id="dre:553303"/>
<dbReference type="AGR" id="ZFIN:ZDB-GENE-041210-325"/>
<dbReference type="CTD" id="9662"/>
<dbReference type="ZFIN" id="ZDB-GENE-041210-325">
    <property type="gene designation" value="cep135"/>
</dbReference>
<dbReference type="eggNOG" id="ENOG502QT27">
    <property type="taxonomic scope" value="Eukaryota"/>
</dbReference>
<dbReference type="InParanoid" id="Q5RG45"/>
<dbReference type="OMA" id="QGRENTM"/>
<dbReference type="OrthoDB" id="10254663at2759"/>
<dbReference type="PhylomeDB" id="Q5RG45"/>
<dbReference type="TreeFam" id="TF326518"/>
<dbReference type="PRO" id="PR:Q5RG45"/>
<dbReference type="Proteomes" id="UP000000437">
    <property type="component" value="Chromosome 20"/>
</dbReference>
<dbReference type="Bgee" id="ENSDARG00000002991">
    <property type="expression patterns" value="Expressed in mature ovarian follicle and 27 other cell types or tissues"/>
</dbReference>
<dbReference type="ExpressionAtlas" id="Q5RG45">
    <property type="expression patterns" value="baseline and differential"/>
</dbReference>
<dbReference type="GO" id="GO:0005814">
    <property type="term" value="C:centriole"/>
    <property type="evidence" value="ECO:0000250"/>
    <property type="project" value="UniProtKB"/>
</dbReference>
<dbReference type="GO" id="GO:0005813">
    <property type="term" value="C:centrosome"/>
    <property type="evidence" value="ECO:0000318"/>
    <property type="project" value="GO_Central"/>
</dbReference>
<dbReference type="GO" id="GO:0005737">
    <property type="term" value="C:cytoplasm"/>
    <property type="evidence" value="ECO:0007669"/>
    <property type="project" value="UniProtKB-KW"/>
</dbReference>
<dbReference type="GO" id="GO:0007099">
    <property type="term" value="P:centriole replication"/>
    <property type="evidence" value="ECO:0000318"/>
    <property type="project" value="GO_Central"/>
</dbReference>
<dbReference type="CDD" id="cd22292">
    <property type="entry name" value="cc_Cep135_MBD"/>
    <property type="match status" value="1"/>
</dbReference>
<dbReference type="Gene3D" id="1.10.287.1490">
    <property type="match status" value="1"/>
</dbReference>
<dbReference type="InterPro" id="IPR051877">
    <property type="entry name" value="Centriole_BasalBody_StrucProt"/>
</dbReference>
<dbReference type="PANTHER" id="PTHR20544">
    <property type="entry name" value="CENTROSOMAL PROTEIN CEP135"/>
    <property type="match status" value="1"/>
</dbReference>
<dbReference type="PANTHER" id="PTHR20544:SF0">
    <property type="entry name" value="NUCLEOPROTEIN TPR_MLP1 DOMAIN-CONTAINING PROTEIN"/>
    <property type="match status" value="1"/>
</dbReference>
<dbReference type="SUPFAM" id="SSF57997">
    <property type="entry name" value="Tropomyosin"/>
    <property type="match status" value="1"/>
</dbReference>
<comment type="function">
    <text evidence="1">Centrosomal microtubule-binding protein involved in centriole biogenesis. Acts as a scaffolding protein during early centriole biogenesis. Required for the targeting of centriole satellite proteins to centrosomes. Also required for centriole-centriole cohesion during interphase by acting as a platform protein for cep250 at the centriole (By similarity).</text>
</comment>
<comment type="subunit">
    <text evidence="1">Homodimer.</text>
</comment>
<comment type="subcellular location">
    <subcellularLocation>
        <location evidence="1 2">Cytoplasm</location>
        <location evidence="1 2">Cytoskeleton</location>
        <location evidence="1 2">Microtubule organizing center</location>
        <location evidence="1 2">Centrosome</location>
        <location evidence="1 2">Centriole</location>
    </subcellularLocation>
    <text evidence="1">During centriole biogenesis, it is concentrated within the proximal lumen of both parental centrioles and procentrioles.</text>
</comment>
<comment type="domain">
    <text evidence="1">Coiled-coil domains are critical for microtubule binding via the formation of a two-stranded coiled-coil structure in homodimers.</text>
</comment>
<comment type="similarity">
    <text evidence="5">Belongs to the CEP135/TSGA10 family.</text>
</comment>
<gene>
    <name type="primary">cep135</name>
    <name type="ORF">si:dkeyp-117h8.1</name>
</gene>
<keyword id="KW-0002">3D-structure</keyword>
<keyword id="KW-0175">Coiled coil</keyword>
<keyword id="KW-0963">Cytoplasm</keyword>
<keyword id="KW-0206">Cytoskeleton</keyword>
<keyword id="KW-1185">Reference proteome</keyword>